<comment type="function">
    <text evidence="4">Plays an important role in the abiotic stresses-induced abscisic acid (ABA) signaling and biosynthesis. Acts as a positive regulator of ABA-mediated seed germination inhibition. Functions downstream of ABF2/AREB1, ABF4/AREB2 and ABF3.</text>
</comment>
<comment type="subunit">
    <text evidence="4">Homodimer.</text>
</comment>
<comment type="subcellular location">
    <subcellularLocation>
        <location evidence="4">Cell membrane</location>
        <topology evidence="1">Single-pass membrane protein</topology>
    </subcellularLocation>
    <subcellularLocation>
        <location evidence="4">Cytoplasm</location>
        <location evidence="4">Cytosol</location>
    </subcellularLocation>
    <text evidence="4">Moves from plasma membrane to cytosol under abiotic stress.</text>
</comment>
<comment type="tissue specificity">
    <text evidence="4">Highly expressed in seeds and at lower level in roots and senescing leaves. Expressed in leaves and flowers.</text>
</comment>
<comment type="induction">
    <text evidence="4">Induced by abscisic acid (ABA), osmotic shock and drought stress. Slightly induced by salt stress.</text>
</comment>
<comment type="disruption phenotype">
    <text evidence="4">No visible phenotype under normal growth conditions, but mutant seeds show decreased sensitivity to abscisic acid (ABA) during germination.</text>
</comment>
<comment type="sequence caution" evidence="6">
    <conflict type="erroneous gene model prediction">
        <sequence resource="EMBL-CDS" id="AAF23842"/>
    </conflict>
</comment>
<dbReference type="EMBL" id="AC007234">
    <property type="protein sequence ID" value="AAF23842.1"/>
    <property type="status" value="ALT_SEQ"/>
    <property type="molecule type" value="Genomic_DNA"/>
</dbReference>
<dbReference type="EMBL" id="CP002684">
    <property type="protein sequence ID" value="AEE34412.1"/>
    <property type="molecule type" value="Genomic_DNA"/>
</dbReference>
<dbReference type="EMBL" id="AY086125">
    <property type="protein sequence ID" value="AAM63331.1"/>
    <property type="molecule type" value="mRNA"/>
</dbReference>
<dbReference type="RefSeq" id="NP_564862.1">
    <property type="nucleotide sequence ID" value="NM_105243.4"/>
</dbReference>
<dbReference type="FunCoup" id="Q8LD98">
    <property type="interactions" value="695"/>
</dbReference>
<dbReference type="IntAct" id="Q8LD98">
    <property type="interactions" value="136"/>
</dbReference>
<dbReference type="STRING" id="3702.Q8LD98"/>
<dbReference type="GlyCosmos" id="Q8LD98">
    <property type="glycosylation" value="4 sites, No reported glycans"/>
</dbReference>
<dbReference type="GlyGen" id="Q8LD98">
    <property type="glycosylation" value="4 sites"/>
</dbReference>
<dbReference type="SwissPalm" id="Q8LD98"/>
<dbReference type="PaxDb" id="3702-AT1G65690.1"/>
<dbReference type="ProteomicsDB" id="250510"/>
<dbReference type="EnsemblPlants" id="AT1G65690.1">
    <property type="protein sequence ID" value="AT1G65690.1"/>
    <property type="gene ID" value="AT1G65690"/>
</dbReference>
<dbReference type="GeneID" id="842880"/>
<dbReference type="Gramene" id="AT1G65690.1">
    <property type="protein sequence ID" value="AT1G65690.1"/>
    <property type="gene ID" value="AT1G65690"/>
</dbReference>
<dbReference type="KEGG" id="ath:AT1G65690"/>
<dbReference type="Araport" id="AT1G65690"/>
<dbReference type="TAIR" id="AT1G65690">
    <property type="gene designation" value="NHL6"/>
</dbReference>
<dbReference type="eggNOG" id="ENOG502QVVS">
    <property type="taxonomic scope" value="Eukaryota"/>
</dbReference>
<dbReference type="HOGENOM" id="CLU_051752_0_2_1"/>
<dbReference type="InParanoid" id="Q8LD98"/>
<dbReference type="OMA" id="WSCCLFF"/>
<dbReference type="OrthoDB" id="1917746at2759"/>
<dbReference type="PhylomeDB" id="Q8LD98"/>
<dbReference type="PRO" id="PR:Q8LD98"/>
<dbReference type="Proteomes" id="UP000006548">
    <property type="component" value="Chromosome 1"/>
</dbReference>
<dbReference type="ExpressionAtlas" id="Q8LD98">
    <property type="expression patterns" value="baseline and differential"/>
</dbReference>
<dbReference type="GO" id="GO:0005829">
    <property type="term" value="C:cytosol"/>
    <property type="evidence" value="ECO:0000314"/>
    <property type="project" value="TAIR"/>
</dbReference>
<dbReference type="GO" id="GO:0005886">
    <property type="term" value="C:plasma membrane"/>
    <property type="evidence" value="ECO:0000314"/>
    <property type="project" value="TAIR"/>
</dbReference>
<dbReference type="GO" id="GO:0009738">
    <property type="term" value="P:abscisic acid-activated signaling pathway"/>
    <property type="evidence" value="ECO:0007669"/>
    <property type="project" value="UniProtKB-KW"/>
</dbReference>
<dbReference type="GO" id="GO:0098542">
    <property type="term" value="P:defense response to other organism"/>
    <property type="evidence" value="ECO:0007669"/>
    <property type="project" value="InterPro"/>
</dbReference>
<dbReference type="GO" id="GO:0010116">
    <property type="term" value="P:positive regulation of abscisic acid biosynthetic process"/>
    <property type="evidence" value="ECO:0000315"/>
    <property type="project" value="TAIR"/>
</dbReference>
<dbReference type="GO" id="GO:0009737">
    <property type="term" value="P:response to abscisic acid"/>
    <property type="evidence" value="ECO:0000315"/>
    <property type="project" value="TAIR"/>
</dbReference>
<dbReference type="GO" id="GO:0006970">
    <property type="term" value="P:response to osmotic stress"/>
    <property type="evidence" value="ECO:0000315"/>
    <property type="project" value="TAIR"/>
</dbReference>
<dbReference type="GO" id="GO:1902074">
    <property type="term" value="P:response to salt"/>
    <property type="evidence" value="ECO:0000315"/>
    <property type="project" value="TAIR"/>
</dbReference>
<dbReference type="InterPro" id="IPR004864">
    <property type="entry name" value="LEA_2"/>
</dbReference>
<dbReference type="InterPro" id="IPR044839">
    <property type="entry name" value="NDR1-like"/>
</dbReference>
<dbReference type="PANTHER" id="PTHR31234">
    <property type="entry name" value="LATE EMBRYOGENESIS ABUNDANT (LEA) HYDROXYPROLINE-RICH GLYCOPROTEIN FAMILY"/>
    <property type="match status" value="1"/>
</dbReference>
<dbReference type="PANTHER" id="PTHR31234:SF72">
    <property type="entry name" value="NDR1_HIN1-LIKE PROTEIN 6"/>
    <property type="match status" value="1"/>
</dbReference>
<dbReference type="Pfam" id="PF03168">
    <property type="entry name" value="LEA_2"/>
    <property type="match status" value="1"/>
</dbReference>
<evidence type="ECO:0000255" key="1"/>
<evidence type="ECO:0000255" key="2">
    <source>
        <dbReference type="PROSITE-ProRule" id="PRU00498"/>
    </source>
</evidence>
<evidence type="ECO:0000256" key="3">
    <source>
        <dbReference type="SAM" id="MobiDB-lite"/>
    </source>
</evidence>
<evidence type="ECO:0000269" key="4">
    <source>
    </source>
</evidence>
<evidence type="ECO:0000303" key="5">
    <source>
    </source>
</evidence>
<evidence type="ECO:0000305" key="6"/>
<evidence type="ECO:0000312" key="7">
    <source>
        <dbReference type="Araport" id="AT1G65690"/>
    </source>
</evidence>
<evidence type="ECO:0000312" key="8">
    <source>
        <dbReference type="EMBL" id="AAF23842.1"/>
    </source>
</evidence>
<name>NHL6_ARATH</name>
<reference key="1">
    <citation type="journal article" date="2000" name="Nature">
        <title>Sequence and analysis of chromosome 1 of the plant Arabidopsis thaliana.</title>
        <authorList>
            <person name="Theologis A."/>
            <person name="Ecker J.R."/>
            <person name="Palm C.J."/>
            <person name="Federspiel N.A."/>
            <person name="Kaul S."/>
            <person name="White O."/>
            <person name="Alonso J."/>
            <person name="Altafi H."/>
            <person name="Araujo R."/>
            <person name="Bowman C.L."/>
            <person name="Brooks S.Y."/>
            <person name="Buehler E."/>
            <person name="Chan A."/>
            <person name="Chao Q."/>
            <person name="Chen H."/>
            <person name="Cheuk R.F."/>
            <person name="Chin C.W."/>
            <person name="Chung M.K."/>
            <person name="Conn L."/>
            <person name="Conway A.B."/>
            <person name="Conway A.R."/>
            <person name="Creasy T.H."/>
            <person name="Dewar K."/>
            <person name="Dunn P."/>
            <person name="Etgu P."/>
            <person name="Feldblyum T.V."/>
            <person name="Feng J.-D."/>
            <person name="Fong B."/>
            <person name="Fujii C.Y."/>
            <person name="Gill J.E."/>
            <person name="Goldsmith A.D."/>
            <person name="Haas B."/>
            <person name="Hansen N.F."/>
            <person name="Hughes B."/>
            <person name="Huizar L."/>
            <person name="Hunter J.L."/>
            <person name="Jenkins J."/>
            <person name="Johnson-Hopson C."/>
            <person name="Khan S."/>
            <person name="Khaykin E."/>
            <person name="Kim C.J."/>
            <person name="Koo H.L."/>
            <person name="Kremenetskaia I."/>
            <person name="Kurtz D.B."/>
            <person name="Kwan A."/>
            <person name="Lam B."/>
            <person name="Langin-Hooper S."/>
            <person name="Lee A."/>
            <person name="Lee J.M."/>
            <person name="Lenz C.A."/>
            <person name="Li J.H."/>
            <person name="Li Y.-P."/>
            <person name="Lin X."/>
            <person name="Liu S.X."/>
            <person name="Liu Z.A."/>
            <person name="Luros J.S."/>
            <person name="Maiti R."/>
            <person name="Marziali A."/>
            <person name="Militscher J."/>
            <person name="Miranda M."/>
            <person name="Nguyen M."/>
            <person name="Nierman W.C."/>
            <person name="Osborne B.I."/>
            <person name="Pai G."/>
            <person name="Peterson J."/>
            <person name="Pham P.K."/>
            <person name="Rizzo M."/>
            <person name="Rooney T."/>
            <person name="Rowley D."/>
            <person name="Sakano H."/>
            <person name="Salzberg S.L."/>
            <person name="Schwartz J.R."/>
            <person name="Shinn P."/>
            <person name="Southwick A.M."/>
            <person name="Sun H."/>
            <person name="Tallon L.J."/>
            <person name="Tambunga G."/>
            <person name="Toriumi M.J."/>
            <person name="Town C.D."/>
            <person name="Utterback T."/>
            <person name="Van Aken S."/>
            <person name="Vaysberg M."/>
            <person name="Vysotskaia V.S."/>
            <person name="Walker M."/>
            <person name="Wu D."/>
            <person name="Yu G."/>
            <person name="Fraser C.M."/>
            <person name="Venter J.C."/>
            <person name="Davis R.W."/>
        </authorList>
    </citation>
    <scope>NUCLEOTIDE SEQUENCE [LARGE SCALE GENOMIC DNA]</scope>
    <source>
        <strain>cv. Columbia</strain>
    </source>
</reference>
<reference key="2">
    <citation type="journal article" date="2017" name="Plant J.">
        <title>Araport11: a complete reannotation of the Arabidopsis thaliana reference genome.</title>
        <authorList>
            <person name="Cheng C.Y."/>
            <person name="Krishnakumar V."/>
            <person name="Chan A.P."/>
            <person name="Thibaud-Nissen F."/>
            <person name="Schobel S."/>
            <person name="Town C.D."/>
        </authorList>
    </citation>
    <scope>GENOME REANNOTATION</scope>
    <source>
        <strain>cv. Columbia</strain>
    </source>
</reference>
<reference key="3">
    <citation type="submission" date="2002-03" db="EMBL/GenBank/DDBJ databases">
        <title>Full-length cDNA from Arabidopsis thaliana.</title>
        <authorList>
            <person name="Brover V.V."/>
            <person name="Troukhan M.E."/>
            <person name="Alexandrov N.A."/>
            <person name="Lu Y.-P."/>
            <person name="Flavell R.B."/>
            <person name="Feldmann K.A."/>
        </authorList>
    </citation>
    <scope>NUCLEOTIDE SEQUENCE [LARGE SCALE MRNA]</scope>
</reference>
<reference key="4">
    <citation type="journal article" date="2016" name="PLoS ONE">
        <title>Overexpression of the NDR1/HIN1-like gene NHL6 modifies seed germination in response to abscisic acid and abiotic stresses in Arabidopsis.</title>
        <authorList>
            <person name="Bao Y."/>
            <person name="Song W.M."/>
            <person name="Pan J."/>
            <person name="Jiang C.M."/>
            <person name="Srivastava R."/>
            <person name="Li B."/>
            <person name="Zhu L.Y."/>
            <person name="Su H.Y."/>
            <person name="Gao X.S."/>
            <person name="Liu H."/>
            <person name="Yu X."/>
            <person name="Yang L."/>
            <person name="Cheng X.H."/>
            <person name="Zhang H.X."/>
        </authorList>
    </citation>
    <scope>FUNCTION</scope>
    <scope>SUBUNIT</scope>
    <scope>SUBCELLULAR LOCATION</scope>
    <scope>TISSUE SPECIFICITY</scope>
    <scope>INDUCTION</scope>
    <scope>DISRUPTION PHENOTYPE</scope>
</reference>
<feature type="chain" id="PRO_0000439592" description="NDR1/HIN1-like protein 6">
    <location>
        <begin position="1"/>
        <end position="252"/>
    </location>
</feature>
<feature type="transmembrane region" description="Helical" evidence="1">
    <location>
        <begin position="70"/>
        <end position="90"/>
    </location>
</feature>
<feature type="region of interest" description="Disordered" evidence="3">
    <location>
        <begin position="1"/>
        <end position="46"/>
    </location>
</feature>
<feature type="glycosylation site" description="N-linked (GlcNAc...) asparagine" evidence="2">
    <location>
        <position position="121"/>
    </location>
</feature>
<feature type="glycosylation site" description="N-linked (GlcNAc...) asparagine" evidence="2">
    <location>
        <position position="154"/>
    </location>
</feature>
<feature type="glycosylation site" description="N-linked (GlcNAc...) asparagine" evidence="2">
    <location>
        <position position="166"/>
    </location>
</feature>
<feature type="glycosylation site" description="N-linked (GlcNAc...) asparagine" evidence="2">
    <location>
        <position position="180"/>
    </location>
</feature>
<accession>Q8LD98</accession>
<accession>Q9SHY5</accession>
<keyword id="KW-0938">Abscisic acid signaling pathway</keyword>
<keyword id="KW-1003">Cell membrane</keyword>
<keyword id="KW-0963">Cytoplasm</keyword>
<keyword id="KW-0325">Glycoprotein</keyword>
<keyword id="KW-0472">Membrane</keyword>
<keyword id="KW-1185">Reference proteome</keyword>
<keyword id="KW-0346">Stress response</keyword>
<keyword id="KW-0812">Transmembrane</keyword>
<keyword id="KW-1133">Transmembrane helix</keyword>
<sequence length="252" mass="28574">MSQHQKIYPVQDPEAATARPTAPLVPRGSSRSEHGDPSKVPLNQRPQRFVPLAPPKKRRSCCCRCFCYTFCFLLLLVVAVGASIGILYLVFKPKLPDYSIDRLQLTRFALNQDSSLTTAFNVTITAKNPNEKIGIYYEDGSKITVWYMEHQLSNGSLPKFYQGHENTTVIYVEMTGQTQNASGLRTTLEEQQQRTGNIPLRIRVNQPVRVKFGKLKLFEVRFLVRCGVFVDSLATNNVIKIQSSSCKFRLRL</sequence>
<gene>
    <name evidence="5" type="primary">NHL6</name>
    <name evidence="7" type="ordered locus">At1g65690</name>
    <name evidence="8" type="ORF">F1E22.7</name>
</gene>
<protein>
    <recommendedName>
        <fullName evidence="5">NDR1/HIN1-like protein 6</fullName>
    </recommendedName>
</protein>
<proteinExistence type="evidence at protein level"/>
<organism>
    <name type="scientific">Arabidopsis thaliana</name>
    <name type="common">Mouse-ear cress</name>
    <dbReference type="NCBI Taxonomy" id="3702"/>
    <lineage>
        <taxon>Eukaryota</taxon>
        <taxon>Viridiplantae</taxon>
        <taxon>Streptophyta</taxon>
        <taxon>Embryophyta</taxon>
        <taxon>Tracheophyta</taxon>
        <taxon>Spermatophyta</taxon>
        <taxon>Magnoliopsida</taxon>
        <taxon>eudicotyledons</taxon>
        <taxon>Gunneridae</taxon>
        <taxon>Pentapetalae</taxon>
        <taxon>rosids</taxon>
        <taxon>malvids</taxon>
        <taxon>Brassicales</taxon>
        <taxon>Brassicaceae</taxon>
        <taxon>Camelineae</taxon>
        <taxon>Arabidopsis</taxon>
    </lineage>
</organism>